<accession>Q3JW91</accession>
<organism>
    <name type="scientific">Burkholderia pseudomallei (strain 1710b)</name>
    <dbReference type="NCBI Taxonomy" id="320372"/>
    <lineage>
        <taxon>Bacteria</taxon>
        <taxon>Pseudomonadati</taxon>
        <taxon>Pseudomonadota</taxon>
        <taxon>Betaproteobacteria</taxon>
        <taxon>Burkholderiales</taxon>
        <taxon>Burkholderiaceae</taxon>
        <taxon>Burkholderia</taxon>
        <taxon>pseudomallei group</taxon>
    </lineage>
</organism>
<keyword id="KW-0002">3D-structure</keyword>
<keyword id="KW-0067">ATP-binding</keyword>
<keyword id="KW-0173">Coenzyme A biosynthesis</keyword>
<keyword id="KW-0963">Cytoplasm</keyword>
<keyword id="KW-0460">Magnesium</keyword>
<keyword id="KW-0547">Nucleotide-binding</keyword>
<keyword id="KW-0548">Nucleotidyltransferase</keyword>
<keyword id="KW-0808">Transferase</keyword>
<proteinExistence type="evidence at protein level"/>
<reference key="1">
    <citation type="journal article" date="2010" name="Genome Biol. Evol.">
        <title>Continuing evolution of Burkholderia mallei through genome reduction and large-scale rearrangements.</title>
        <authorList>
            <person name="Losada L."/>
            <person name="Ronning C.M."/>
            <person name="DeShazer D."/>
            <person name="Woods D."/>
            <person name="Fedorova N."/>
            <person name="Kim H.S."/>
            <person name="Shabalina S.A."/>
            <person name="Pearson T.R."/>
            <person name="Brinkac L."/>
            <person name="Tan P."/>
            <person name="Nandi T."/>
            <person name="Crabtree J."/>
            <person name="Badger J."/>
            <person name="Beckstrom-Sternberg S."/>
            <person name="Saqib M."/>
            <person name="Schutzer S.E."/>
            <person name="Keim P."/>
            <person name="Nierman W.C."/>
        </authorList>
    </citation>
    <scope>NUCLEOTIDE SEQUENCE [LARGE SCALE GENOMIC DNA]</scope>
    <source>
        <strain>1710b</strain>
    </source>
</reference>
<reference key="2">
    <citation type="journal article" date="2011" name="Acta Crystallogr. F">
        <title>Structures of phosphopantetheine adenylyltransferase from Burkholderia pseudomallei.</title>
        <authorList>
            <person name="Edwards T.E."/>
            <person name="Leibly D.J."/>
            <person name="Bhandari J."/>
            <person name="Statnekov J.B."/>
            <person name="Phan I."/>
            <person name="Dieterich S.H."/>
            <person name="Abendroth J."/>
            <person name="Staker B.L."/>
            <person name="Van Voorhis W.C."/>
            <person name="Myler P.J."/>
            <person name="Stewart L.J."/>
        </authorList>
    </citation>
    <scope>X-RAY CRYSTALLOGRAPHY (1.60 ANGSTROMS) IN COMPLEXES WITH 3'-DEPHOSPHO-COA; 4'-DIPHOSPHOPANTETHEINE AND ADENINE</scope>
    <scope>SUBUNIT</scope>
    <source>
        <strain>1710b</strain>
    </source>
</reference>
<dbReference type="EC" id="2.7.7.3" evidence="1"/>
<dbReference type="EMBL" id="CP000124">
    <property type="protein sequence ID" value="ABA49742.1"/>
    <property type="molecule type" value="Genomic_DNA"/>
</dbReference>
<dbReference type="RefSeq" id="WP_004195249.1">
    <property type="nucleotide sequence ID" value="NC_007434.1"/>
</dbReference>
<dbReference type="PDB" id="3K9W">
    <property type="method" value="X-ray"/>
    <property type="resolution" value="1.60 A"/>
    <property type="chains" value="A=1-166"/>
</dbReference>
<dbReference type="PDB" id="3PXU">
    <property type="method" value="X-ray"/>
    <property type="resolution" value="2.10 A"/>
    <property type="chains" value="A=1-166"/>
</dbReference>
<dbReference type="PDBsum" id="3K9W"/>
<dbReference type="PDBsum" id="3PXU"/>
<dbReference type="SMR" id="Q3JW91"/>
<dbReference type="EnsemblBacteria" id="ABA49742">
    <property type="protein sequence ID" value="ABA49742"/>
    <property type="gene ID" value="BURPS1710b_0748"/>
</dbReference>
<dbReference type="GeneID" id="93059037"/>
<dbReference type="KEGG" id="bpm:BURPS1710b_0748"/>
<dbReference type="HOGENOM" id="CLU_100149_0_1_4"/>
<dbReference type="BRENDA" id="2.7.7.3">
    <property type="organism ID" value="1031"/>
</dbReference>
<dbReference type="UniPathway" id="UPA00241">
    <property type="reaction ID" value="UER00355"/>
</dbReference>
<dbReference type="EvolutionaryTrace" id="Q3JW91"/>
<dbReference type="Proteomes" id="UP000002700">
    <property type="component" value="Chromosome I"/>
</dbReference>
<dbReference type="GO" id="GO:0005737">
    <property type="term" value="C:cytoplasm"/>
    <property type="evidence" value="ECO:0007669"/>
    <property type="project" value="UniProtKB-SubCell"/>
</dbReference>
<dbReference type="GO" id="GO:0005524">
    <property type="term" value="F:ATP binding"/>
    <property type="evidence" value="ECO:0007669"/>
    <property type="project" value="UniProtKB-KW"/>
</dbReference>
<dbReference type="GO" id="GO:0004595">
    <property type="term" value="F:pantetheine-phosphate adenylyltransferase activity"/>
    <property type="evidence" value="ECO:0007669"/>
    <property type="project" value="UniProtKB-UniRule"/>
</dbReference>
<dbReference type="GO" id="GO:0015937">
    <property type="term" value="P:coenzyme A biosynthetic process"/>
    <property type="evidence" value="ECO:0007669"/>
    <property type="project" value="UniProtKB-UniRule"/>
</dbReference>
<dbReference type="CDD" id="cd02163">
    <property type="entry name" value="PPAT"/>
    <property type="match status" value="1"/>
</dbReference>
<dbReference type="Gene3D" id="3.40.50.620">
    <property type="entry name" value="HUPs"/>
    <property type="match status" value="1"/>
</dbReference>
<dbReference type="HAMAP" id="MF_00151">
    <property type="entry name" value="PPAT_bact"/>
    <property type="match status" value="1"/>
</dbReference>
<dbReference type="InterPro" id="IPR004821">
    <property type="entry name" value="Cyt_trans-like"/>
</dbReference>
<dbReference type="InterPro" id="IPR001980">
    <property type="entry name" value="PPAT"/>
</dbReference>
<dbReference type="InterPro" id="IPR014729">
    <property type="entry name" value="Rossmann-like_a/b/a_fold"/>
</dbReference>
<dbReference type="NCBIfam" id="TIGR01510">
    <property type="entry name" value="coaD_prev_kdtB"/>
    <property type="match status" value="1"/>
</dbReference>
<dbReference type="NCBIfam" id="TIGR00125">
    <property type="entry name" value="cyt_tran_rel"/>
    <property type="match status" value="1"/>
</dbReference>
<dbReference type="PANTHER" id="PTHR21342">
    <property type="entry name" value="PHOSPHOPANTETHEINE ADENYLYLTRANSFERASE"/>
    <property type="match status" value="1"/>
</dbReference>
<dbReference type="PANTHER" id="PTHR21342:SF1">
    <property type="entry name" value="PHOSPHOPANTETHEINE ADENYLYLTRANSFERASE"/>
    <property type="match status" value="1"/>
</dbReference>
<dbReference type="Pfam" id="PF01467">
    <property type="entry name" value="CTP_transf_like"/>
    <property type="match status" value="1"/>
</dbReference>
<dbReference type="PRINTS" id="PR01020">
    <property type="entry name" value="LPSBIOSNTHSS"/>
</dbReference>
<dbReference type="SUPFAM" id="SSF52374">
    <property type="entry name" value="Nucleotidylyl transferase"/>
    <property type="match status" value="1"/>
</dbReference>
<protein>
    <recommendedName>
        <fullName evidence="1 3">Phosphopantetheine adenylyltransferase</fullName>
        <ecNumber evidence="1">2.7.7.3</ecNumber>
    </recommendedName>
    <alternativeName>
        <fullName evidence="1">Dephospho-CoA pyrophosphorylase</fullName>
    </alternativeName>
    <alternativeName>
        <fullName evidence="1 3">Pantetheine-phosphate adenylyltransferase</fullName>
        <shortName evidence="1 3">PPAT</shortName>
    </alternativeName>
</protein>
<name>COAD_BURP1</name>
<evidence type="ECO:0000255" key="1">
    <source>
        <dbReference type="HAMAP-Rule" id="MF_00151"/>
    </source>
</evidence>
<evidence type="ECO:0000269" key="2">
    <source>
    </source>
</evidence>
<evidence type="ECO:0000303" key="3">
    <source>
    </source>
</evidence>
<evidence type="ECO:0000305" key="4">
    <source>
    </source>
</evidence>
<evidence type="ECO:0007744" key="5">
    <source>
        <dbReference type="PDB" id="3K9W"/>
    </source>
</evidence>
<evidence type="ECO:0007744" key="6">
    <source>
        <dbReference type="PDB" id="3PXU"/>
    </source>
</evidence>
<evidence type="ECO:0007829" key="7">
    <source>
        <dbReference type="PDB" id="3K9W"/>
    </source>
</evidence>
<gene>
    <name evidence="1 3" type="primary">coaD</name>
    <name type="ordered locus">BURPS1710b_0748</name>
</gene>
<sequence>MVVAVYPGTFDPLTRGHEDLVRRASSIFDTLVVGVADSRAKKPFFSLEERLKIANEVLGHYPNVKVMGFTGLLKDFVRANDARVIVRGLRAVSDFEYEFQMAGMNRYLLPDVETMFMTPSDQYQFISGTIVREIAQLGGDVSKFVFPSVEKWLTEKVAAMAQGPSA</sequence>
<feature type="chain" id="PRO_1000011110" description="Phosphopantetheine adenylyltransferase">
    <location>
        <begin position="1"/>
        <end position="166"/>
    </location>
</feature>
<feature type="binding site" evidence="4 6">
    <location>
        <begin position="6"/>
        <end position="10"/>
    </location>
    <ligand>
        <name>ATP</name>
        <dbReference type="ChEBI" id="CHEBI:30616"/>
    </ligand>
</feature>
<feature type="binding site" evidence="1">
    <location>
        <position position="9"/>
    </location>
    <ligand>
        <name>substrate</name>
    </ligand>
</feature>
<feature type="binding site" evidence="1 4 6">
    <location>
        <position position="17"/>
    </location>
    <ligand>
        <name>ATP</name>
        <dbReference type="ChEBI" id="CHEBI:30616"/>
    </ligand>
</feature>
<feature type="binding site" evidence="1 4 5 6">
    <location>
        <position position="41"/>
    </location>
    <ligand>
        <name>substrate</name>
    </ligand>
</feature>
<feature type="binding site" evidence="1 4 5 6">
    <location>
        <position position="73"/>
    </location>
    <ligand>
        <name>substrate</name>
    </ligand>
</feature>
<feature type="binding site" evidence="1 4 5 6">
    <location>
        <position position="87"/>
    </location>
    <ligand>
        <name>substrate</name>
    </ligand>
</feature>
<feature type="binding site" evidence="1 4 6">
    <location>
        <begin position="88"/>
        <end position="90"/>
    </location>
    <ligand>
        <name>ATP</name>
        <dbReference type="ChEBI" id="CHEBI:30616"/>
    </ligand>
</feature>
<feature type="binding site" evidence="1 4 6">
    <location>
        <position position="98"/>
    </location>
    <ligand>
        <name>ATP</name>
        <dbReference type="ChEBI" id="CHEBI:30616"/>
    </ligand>
</feature>
<feature type="binding site" evidence="1 4">
    <location>
        <begin position="123"/>
        <end position="129"/>
    </location>
    <ligand>
        <name>ATP</name>
        <dbReference type="ChEBI" id="CHEBI:30616"/>
    </ligand>
</feature>
<feature type="site" description="Transition state stabilizer" evidence="1">
    <location>
        <position position="17"/>
    </location>
</feature>
<feature type="strand" evidence="7">
    <location>
        <begin position="3"/>
        <end position="8"/>
    </location>
</feature>
<feature type="helix" evidence="7">
    <location>
        <begin position="15"/>
        <end position="27"/>
    </location>
</feature>
<feature type="strand" evidence="7">
    <location>
        <begin position="28"/>
        <end position="36"/>
    </location>
</feature>
<feature type="helix" evidence="7">
    <location>
        <begin position="39"/>
        <end position="41"/>
    </location>
</feature>
<feature type="helix" evidence="7">
    <location>
        <begin position="47"/>
        <end position="58"/>
    </location>
</feature>
<feature type="strand" evidence="7">
    <location>
        <begin position="64"/>
        <end position="71"/>
    </location>
</feature>
<feature type="helix" evidence="7">
    <location>
        <begin position="73"/>
        <end position="79"/>
    </location>
</feature>
<feature type="strand" evidence="7">
    <location>
        <begin position="83"/>
        <end position="88"/>
    </location>
</feature>
<feature type="helix" evidence="7">
    <location>
        <begin position="95"/>
        <end position="108"/>
    </location>
</feature>
<feature type="strand" evidence="7">
    <location>
        <begin position="113"/>
        <end position="117"/>
    </location>
</feature>
<feature type="helix" evidence="7">
    <location>
        <begin position="121"/>
        <end position="123"/>
    </location>
</feature>
<feature type="helix" evidence="7">
    <location>
        <begin position="128"/>
        <end position="136"/>
    </location>
</feature>
<feature type="turn" evidence="7">
    <location>
        <begin position="142"/>
        <end position="144"/>
    </location>
</feature>
<feature type="helix" evidence="7">
    <location>
        <begin position="147"/>
        <end position="160"/>
    </location>
</feature>
<comment type="function">
    <text evidence="1">Reversibly transfers an adenylyl group from ATP to 4'-phosphopantetheine, yielding dephospho-CoA (dPCoA) and pyrophosphate.</text>
</comment>
<comment type="catalytic activity">
    <reaction evidence="1">
        <text>(R)-4'-phosphopantetheine + ATP + H(+) = 3'-dephospho-CoA + diphosphate</text>
        <dbReference type="Rhea" id="RHEA:19801"/>
        <dbReference type="ChEBI" id="CHEBI:15378"/>
        <dbReference type="ChEBI" id="CHEBI:30616"/>
        <dbReference type="ChEBI" id="CHEBI:33019"/>
        <dbReference type="ChEBI" id="CHEBI:57328"/>
        <dbReference type="ChEBI" id="CHEBI:61723"/>
        <dbReference type="EC" id="2.7.7.3"/>
    </reaction>
</comment>
<comment type="cofactor">
    <cofactor evidence="1">
        <name>Mg(2+)</name>
        <dbReference type="ChEBI" id="CHEBI:18420"/>
    </cofactor>
</comment>
<comment type="pathway">
    <text evidence="1">Cofactor biosynthesis; coenzyme A biosynthesis; CoA from (R)-pantothenate: step 4/5.</text>
</comment>
<comment type="subunit">
    <text evidence="1 2">Homohexamer.</text>
</comment>
<comment type="subcellular location">
    <subcellularLocation>
        <location evidence="1">Cytoplasm</location>
    </subcellularLocation>
</comment>
<comment type="similarity">
    <text evidence="1">Belongs to the bacterial CoaD family.</text>
</comment>